<feature type="signal peptide" evidence="6">
    <location>
        <begin position="1"/>
        <end position="35"/>
    </location>
</feature>
<feature type="chain" id="PRO_0000431770" description="Pectin acetylesterase 5" evidence="6">
    <location>
        <begin position="36"/>
        <end position="427"/>
    </location>
</feature>
<feature type="active site" description="Charge relay system" evidence="2">
    <location>
        <position position="209"/>
    </location>
</feature>
<feature type="active site" description="Charge relay system" evidence="2">
    <location>
        <position position="305"/>
    </location>
</feature>
<feature type="active site" description="Charge relay system" evidence="2">
    <location>
        <position position="372"/>
    </location>
</feature>
<feature type="glycosylation site" description="N-linked (GlcNAc...) asparagine" evidence="3">
    <location>
        <position position="173"/>
    </location>
</feature>
<feature type="glycosylation site" description="N-linked (GlcNAc...) asparagine" evidence="3">
    <location>
        <position position="391"/>
    </location>
</feature>
<feature type="splice variant" id="VSP_057375" description="In isoform 2.">
    <original>TIAE</original>
    <variation>VKDI</variation>
    <location>
        <begin position="393"/>
        <end position="396"/>
    </location>
</feature>
<feature type="splice variant" id="VSP_057376" description="In isoform 2.">
    <location>
        <begin position="397"/>
        <end position="427"/>
    </location>
</feature>
<reference key="1">
    <citation type="journal article" date="2000" name="Nature">
        <title>Sequence and analysis of chromosome 3 of the plant Arabidopsis thaliana.</title>
        <authorList>
            <person name="Salanoubat M."/>
            <person name="Lemcke K."/>
            <person name="Rieger M."/>
            <person name="Ansorge W."/>
            <person name="Unseld M."/>
            <person name="Fartmann B."/>
            <person name="Valle G."/>
            <person name="Bloecker H."/>
            <person name="Perez-Alonso M."/>
            <person name="Obermaier B."/>
            <person name="Delseny M."/>
            <person name="Boutry M."/>
            <person name="Grivell L.A."/>
            <person name="Mache R."/>
            <person name="Puigdomenech P."/>
            <person name="De Simone V."/>
            <person name="Choisne N."/>
            <person name="Artiguenave F."/>
            <person name="Robert C."/>
            <person name="Brottier P."/>
            <person name="Wincker P."/>
            <person name="Cattolico L."/>
            <person name="Weissenbach J."/>
            <person name="Saurin W."/>
            <person name="Quetier F."/>
            <person name="Schaefer M."/>
            <person name="Mueller-Auer S."/>
            <person name="Gabel C."/>
            <person name="Fuchs M."/>
            <person name="Benes V."/>
            <person name="Wurmbach E."/>
            <person name="Drzonek H."/>
            <person name="Erfle H."/>
            <person name="Jordan N."/>
            <person name="Bangert S."/>
            <person name="Wiedelmann R."/>
            <person name="Kranz H."/>
            <person name="Voss H."/>
            <person name="Holland R."/>
            <person name="Brandt P."/>
            <person name="Nyakatura G."/>
            <person name="Vezzi A."/>
            <person name="D'Angelo M."/>
            <person name="Pallavicini A."/>
            <person name="Toppo S."/>
            <person name="Simionati B."/>
            <person name="Conrad A."/>
            <person name="Hornischer K."/>
            <person name="Kauer G."/>
            <person name="Loehnert T.-H."/>
            <person name="Nordsiek G."/>
            <person name="Reichelt J."/>
            <person name="Scharfe M."/>
            <person name="Schoen O."/>
            <person name="Bargues M."/>
            <person name="Terol J."/>
            <person name="Climent J."/>
            <person name="Navarro P."/>
            <person name="Collado C."/>
            <person name="Perez-Perez A."/>
            <person name="Ottenwaelder B."/>
            <person name="Duchemin D."/>
            <person name="Cooke R."/>
            <person name="Laudie M."/>
            <person name="Berger-Llauro C."/>
            <person name="Purnelle B."/>
            <person name="Masuy D."/>
            <person name="de Haan M."/>
            <person name="Maarse A.C."/>
            <person name="Alcaraz J.-P."/>
            <person name="Cottet A."/>
            <person name="Casacuberta E."/>
            <person name="Monfort A."/>
            <person name="Argiriou A."/>
            <person name="Flores M."/>
            <person name="Liguori R."/>
            <person name="Vitale D."/>
            <person name="Mannhaupt G."/>
            <person name="Haase D."/>
            <person name="Schoof H."/>
            <person name="Rudd S."/>
            <person name="Zaccaria P."/>
            <person name="Mewes H.-W."/>
            <person name="Mayer K.F.X."/>
            <person name="Kaul S."/>
            <person name="Town C.D."/>
            <person name="Koo H.L."/>
            <person name="Tallon L.J."/>
            <person name="Jenkins J."/>
            <person name="Rooney T."/>
            <person name="Rizzo M."/>
            <person name="Walts A."/>
            <person name="Utterback T."/>
            <person name="Fujii C.Y."/>
            <person name="Shea T.P."/>
            <person name="Creasy T.H."/>
            <person name="Haas B."/>
            <person name="Maiti R."/>
            <person name="Wu D."/>
            <person name="Peterson J."/>
            <person name="Van Aken S."/>
            <person name="Pai G."/>
            <person name="Militscher J."/>
            <person name="Sellers P."/>
            <person name="Gill J.E."/>
            <person name="Feldblyum T.V."/>
            <person name="Preuss D."/>
            <person name="Lin X."/>
            <person name="Nierman W.C."/>
            <person name="Salzberg S.L."/>
            <person name="White O."/>
            <person name="Venter J.C."/>
            <person name="Fraser C.M."/>
            <person name="Kaneko T."/>
            <person name="Nakamura Y."/>
            <person name="Sato S."/>
            <person name="Kato T."/>
            <person name="Asamizu E."/>
            <person name="Sasamoto S."/>
            <person name="Kimura T."/>
            <person name="Idesawa K."/>
            <person name="Kawashima K."/>
            <person name="Kishida Y."/>
            <person name="Kiyokawa C."/>
            <person name="Kohara M."/>
            <person name="Matsumoto M."/>
            <person name="Matsuno A."/>
            <person name="Muraki A."/>
            <person name="Nakayama S."/>
            <person name="Nakazaki N."/>
            <person name="Shinpo S."/>
            <person name="Takeuchi C."/>
            <person name="Wada T."/>
            <person name="Watanabe A."/>
            <person name="Yamada M."/>
            <person name="Yasuda M."/>
            <person name="Tabata S."/>
        </authorList>
    </citation>
    <scope>NUCLEOTIDE SEQUENCE [LARGE SCALE GENOMIC DNA]</scope>
    <source>
        <strain>cv. Columbia</strain>
    </source>
</reference>
<reference key="2">
    <citation type="journal article" date="2017" name="Plant J.">
        <title>Araport11: a complete reannotation of the Arabidopsis thaliana reference genome.</title>
        <authorList>
            <person name="Cheng C.Y."/>
            <person name="Krishnakumar V."/>
            <person name="Chan A.P."/>
            <person name="Thibaud-Nissen F."/>
            <person name="Schobel S."/>
            <person name="Town C.D."/>
        </authorList>
    </citation>
    <scope>GENOME REANNOTATION</scope>
    <source>
        <strain>cv. Columbia</strain>
    </source>
</reference>
<reference key="3">
    <citation type="submission" date="2006-12" db="EMBL/GenBank/DDBJ databases">
        <title>Arabidopsis ORF clones.</title>
        <authorList>
            <person name="Bautista V.R."/>
            <person name="Kim C.J."/>
            <person name="Chen H."/>
            <person name="Wu S.Y."/>
            <person name="De Los Reyes C."/>
            <person name="Ecker J.R."/>
        </authorList>
    </citation>
    <scope>NUCLEOTIDE SEQUENCE [LARGE SCALE MRNA] (ISOFORM 1)</scope>
    <source>
        <strain>cv. Columbia</strain>
    </source>
</reference>
<reference key="4">
    <citation type="submission" date="2006-07" db="EMBL/GenBank/DDBJ databases">
        <title>Large-scale analysis of RIKEN Arabidopsis full-length (RAFL) cDNAs.</title>
        <authorList>
            <person name="Totoki Y."/>
            <person name="Seki M."/>
            <person name="Ishida J."/>
            <person name="Nakajima M."/>
            <person name="Enju A."/>
            <person name="Kamiya A."/>
            <person name="Narusaka M."/>
            <person name="Shin-i T."/>
            <person name="Nakagawa M."/>
            <person name="Sakamoto N."/>
            <person name="Oishi K."/>
            <person name="Kohara Y."/>
            <person name="Kobayashi M."/>
            <person name="Toyoda A."/>
            <person name="Sakaki Y."/>
            <person name="Sakurai T."/>
            <person name="Iida K."/>
            <person name="Akiyama K."/>
            <person name="Satou M."/>
            <person name="Toyoda T."/>
            <person name="Konagaya A."/>
            <person name="Carninci P."/>
            <person name="Kawai J."/>
            <person name="Hayashizaki Y."/>
            <person name="Shinozaki K."/>
        </authorList>
    </citation>
    <scope>NUCLEOTIDE SEQUENCE [LARGE SCALE MRNA] OF 7-396 (ISOFORM 2)</scope>
    <source>
        <strain>cv. Columbia</strain>
    </source>
</reference>
<reference key="5">
    <citation type="journal article" date="2014" name="Planta">
        <title>Identification and functional characterization of the distinct plant pectin esterases PAE8 and PAE9 and their deletion mutants.</title>
        <authorList>
            <person name="de Souza A."/>
            <person name="Hull P.A."/>
            <person name="Gille S."/>
            <person name="Pauly M."/>
        </authorList>
    </citation>
    <scope>GENE FAMILY</scope>
    <scope>DISRUPTION PHENOTYPE</scope>
</reference>
<name>PAE5_ARATH</name>
<accession>Q9SR22</accession>
<accession>F4IZY1</accession>
<accession>Q0WTI5</accession>
<evidence type="ECO:0000250" key="1">
    <source>
        <dbReference type="UniProtKB" id="B9DFR3"/>
    </source>
</evidence>
<evidence type="ECO:0000250" key="2">
    <source>
        <dbReference type="UniProtKB" id="Q6P988"/>
    </source>
</evidence>
<evidence type="ECO:0000255" key="3">
    <source>
        <dbReference type="PROSITE-ProRule" id="PRU00498"/>
    </source>
</evidence>
<evidence type="ECO:0000269" key="4">
    <source>
    </source>
</evidence>
<evidence type="ECO:0000303" key="5">
    <source>
    </source>
</evidence>
<evidence type="ECO:0000305" key="6"/>
<evidence type="ECO:0000312" key="7">
    <source>
        <dbReference type="Araport" id="AT3G09410"/>
    </source>
</evidence>
<evidence type="ECO:0000312" key="8">
    <source>
        <dbReference type="EMBL" id="AAF14036.1"/>
    </source>
</evidence>
<gene>
    <name evidence="5" type="primary">PAE5</name>
    <name evidence="7" type="ordered locus">At3g09410</name>
    <name evidence="8" type="ORF">F3L24.31</name>
</gene>
<organism>
    <name type="scientific">Arabidopsis thaliana</name>
    <name type="common">Mouse-ear cress</name>
    <dbReference type="NCBI Taxonomy" id="3702"/>
    <lineage>
        <taxon>Eukaryota</taxon>
        <taxon>Viridiplantae</taxon>
        <taxon>Streptophyta</taxon>
        <taxon>Embryophyta</taxon>
        <taxon>Tracheophyta</taxon>
        <taxon>Spermatophyta</taxon>
        <taxon>Magnoliopsida</taxon>
        <taxon>eudicotyledons</taxon>
        <taxon>Gunneridae</taxon>
        <taxon>Pentapetalae</taxon>
        <taxon>rosids</taxon>
        <taxon>malvids</taxon>
        <taxon>Brassicales</taxon>
        <taxon>Brassicaceae</taxon>
        <taxon>Camelineae</taxon>
        <taxon>Arabidopsis</taxon>
    </lineage>
</organism>
<comment type="function">
    <text evidence="1">Hydrolyzes acetyl esters in homogalacturonan regions of pectin. In type I primary cell wall, galacturonic acid residues of pectin can be acetylated at the O-2 and O-3 positions. Decreasing the degree of acetylation of pectin gels in vitro alters their physical properties.</text>
</comment>
<comment type="subcellular location">
    <subcellularLocation>
        <location evidence="6">Secreted</location>
        <location evidence="6">Cell wall</location>
    </subcellularLocation>
</comment>
<comment type="alternative products">
    <event type="alternative splicing"/>
    <isoform>
        <id>Q9SR22-1</id>
        <name>1</name>
        <sequence type="displayed"/>
    </isoform>
    <isoform>
        <id>Q9SR22-2</id>
        <name>2</name>
        <sequence type="described" ref="VSP_057375 VSP_057376"/>
    </isoform>
</comment>
<comment type="disruption phenotype">
    <text evidence="4">No visible phenotype under normal growth conditions.</text>
</comment>
<comment type="similarity">
    <text evidence="6">Belongs to the pectinacetylesterase family.</text>
</comment>
<sequence>MAIPRFSSLLRCRKWAKSDWLVASIGCVLIVFFLSFFFDPTSDSVPSVDRSRPIISPSDLVKLKLSSVAKERGAFCLDGSLPGYHFHEGSGSGSQSWLVHLEGGGWCNTVASCSARALTKLGSSNYFEQEVAFQGVLSSDPSQNPEFFNWNKVAIRYCDGASFSGRPEAEFKNGTRLFFRGQLIWEAIIDELLSMGMSDAKQAILTGCSAGGLASLIHCDYFRDHLPKDAAVKCVSDGGYFLNVPDVLGNPTMRSFYHDVVNLQGVEKSLDQKCVAKTEPSKCMFPQEFLKNIRTPVFLVNPAYDFWQIQHVLVPTSADPDKSWAKCRLNIKECDAEQIKVLHGFRSSMMTAIGEFHQNKDGGMFIDSCYAHCQTVMSVTWHSLTSPRIENKTIAESVGDWYFNRKPVKLIDCPYPCNPSCYNMNFT</sequence>
<proteinExistence type="evidence at transcript level"/>
<dbReference type="EC" id="3.1.1.-" evidence="6"/>
<dbReference type="EMBL" id="AC011436">
    <property type="protein sequence ID" value="AAF14036.1"/>
    <property type="molecule type" value="Genomic_DNA"/>
</dbReference>
<dbReference type="EMBL" id="CP002686">
    <property type="protein sequence ID" value="AEE74764.1"/>
    <property type="molecule type" value="Genomic_DNA"/>
</dbReference>
<dbReference type="EMBL" id="CP002686">
    <property type="protein sequence ID" value="AEE74765.1"/>
    <property type="molecule type" value="Genomic_DNA"/>
</dbReference>
<dbReference type="EMBL" id="AK227569">
    <property type="protein sequence ID" value="BAE99563.1"/>
    <property type="molecule type" value="mRNA"/>
</dbReference>
<dbReference type="EMBL" id="BT029739">
    <property type="protein sequence ID" value="ABM06009.1"/>
    <property type="molecule type" value="mRNA"/>
</dbReference>
<dbReference type="RefSeq" id="NP_187552.3">
    <molecule id="Q9SR22-1"/>
    <property type="nucleotide sequence ID" value="NM_111775.4"/>
</dbReference>
<dbReference type="RefSeq" id="NP_974267.2">
    <molecule id="Q9SR22-2"/>
    <property type="nucleotide sequence ID" value="NM_202538.3"/>
</dbReference>
<dbReference type="SMR" id="Q9SR22"/>
<dbReference type="FunCoup" id="Q9SR22">
    <property type="interactions" value="387"/>
</dbReference>
<dbReference type="STRING" id="3702.Q9SR22"/>
<dbReference type="ESTHER" id="arath-q9sr22">
    <property type="family name" value="Pectinacetylesterase-Notum"/>
</dbReference>
<dbReference type="GlyCosmos" id="Q9SR22">
    <property type="glycosylation" value="2 sites, No reported glycans"/>
</dbReference>
<dbReference type="GlyGen" id="Q9SR22">
    <property type="glycosylation" value="2 sites"/>
</dbReference>
<dbReference type="SwissPalm" id="Q9SR22"/>
<dbReference type="PaxDb" id="3702-AT3G09410.1"/>
<dbReference type="ProteomicsDB" id="248629">
    <molecule id="Q9SR22-1"/>
</dbReference>
<dbReference type="EnsemblPlants" id="AT3G09410.1">
    <molecule id="Q9SR22-1"/>
    <property type="protein sequence ID" value="AT3G09410.1"/>
    <property type="gene ID" value="AT3G09410"/>
</dbReference>
<dbReference type="EnsemblPlants" id="AT3G09410.3">
    <molecule id="Q9SR22-2"/>
    <property type="protein sequence ID" value="AT3G09410.3"/>
    <property type="gene ID" value="AT3G09410"/>
</dbReference>
<dbReference type="GeneID" id="820100"/>
<dbReference type="Gramene" id="AT3G09410.1">
    <molecule id="Q9SR22-1"/>
    <property type="protein sequence ID" value="AT3G09410.1"/>
    <property type="gene ID" value="AT3G09410"/>
</dbReference>
<dbReference type="Gramene" id="AT3G09410.3">
    <molecule id="Q9SR22-2"/>
    <property type="protein sequence ID" value="AT3G09410.3"/>
    <property type="gene ID" value="AT3G09410"/>
</dbReference>
<dbReference type="KEGG" id="ath:AT3G09410"/>
<dbReference type="Araport" id="AT3G09410"/>
<dbReference type="TAIR" id="AT3G09410">
    <property type="gene designation" value="ATPAE5"/>
</dbReference>
<dbReference type="eggNOG" id="KOG4287">
    <property type="taxonomic scope" value="Eukaryota"/>
</dbReference>
<dbReference type="HOGENOM" id="CLU_031008_0_0_1"/>
<dbReference type="InParanoid" id="Q9SR22"/>
<dbReference type="OMA" id="HCQTEME"/>
<dbReference type="OrthoDB" id="2015280at2759"/>
<dbReference type="PhylomeDB" id="Q9SR22"/>
<dbReference type="PRO" id="PR:Q9SR22"/>
<dbReference type="Proteomes" id="UP000006548">
    <property type="component" value="Chromosome 3"/>
</dbReference>
<dbReference type="ExpressionAtlas" id="Q9SR22">
    <property type="expression patterns" value="baseline and differential"/>
</dbReference>
<dbReference type="GO" id="GO:0005576">
    <property type="term" value="C:extracellular region"/>
    <property type="evidence" value="ECO:0007669"/>
    <property type="project" value="UniProtKB-KW"/>
</dbReference>
<dbReference type="GO" id="GO:0016787">
    <property type="term" value="F:hydrolase activity"/>
    <property type="evidence" value="ECO:0007669"/>
    <property type="project" value="UniProtKB-KW"/>
</dbReference>
<dbReference type="GO" id="GO:0071555">
    <property type="term" value="P:cell wall organization"/>
    <property type="evidence" value="ECO:0007669"/>
    <property type="project" value="UniProtKB-KW"/>
</dbReference>
<dbReference type="InterPro" id="IPR029058">
    <property type="entry name" value="AB_hydrolase_fold"/>
</dbReference>
<dbReference type="InterPro" id="IPR004963">
    <property type="entry name" value="PAE/NOTUM"/>
</dbReference>
<dbReference type="PANTHER" id="PTHR21562">
    <property type="entry name" value="NOTUM-RELATED"/>
    <property type="match status" value="1"/>
</dbReference>
<dbReference type="PANTHER" id="PTHR21562:SF60">
    <property type="entry name" value="PECTIN ACETYLESTERASE 5"/>
    <property type="match status" value="1"/>
</dbReference>
<dbReference type="Pfam" id="PF03283">
    <property type="entry name" value="PAE"/>
    <property type="match status" value="1"/>
</dbReference>
<dbReference type="SUPFAM" id="SSF53474">
    <property type="entry name" value="alpha/beta-Hydrolases"/>
    <property type="match status" value="1"/>
</dbReference>
<keyword id="KW-0025">Alternative splicing</keyword>
<keyword id="KW-0134">Cell wall</keyword>
<keyword id="KW-0961">Cell wall biogenesis/degradation</keyword>
<keyword id="KW-0325">Glycoprotein</keyword>
<keyword id="KW-0378">Hydrolase</keyword>
<keyword id="KW-1185">Reference proteome</keyword>
<keyword id="KW-0964">Secreted</keyword>
<keyword id="KW-0732">Signal</keyword>
<protein>
    <recommendedName>
        <fullName evidence="5">Pectin acetylesterase 5</fullName>
        <ecNumber evidence="6">3.1.1.-</ecNumber>
    </recommendedName>
</protein>